<accession>Q66T62</accession>
<comment type="function">
    <text evidence="1 2">Attaches the virus to host cellular receptor, inducing endocytosis of the virion by using different host proteins including TFRC, GRM2 and ITGB1 (By similarity). In the endosome, the acidic pH induces conformational changes in the glycoprotein trimer, which trigger fusion between virus and cell membrane. There is convincing in vitro evidence that the muscular form of the nicotinic acetylcholine receptor (nAChR), the neuronal cell adhesion molecule (NCAM), and the p75 neurotrophin receptor (p75NTR) bind glycoprotein and thereby facilitate rabies virus entry into cells (By similarity).</text>
</comment>
<comment type="subunit">
    <text evidence="1 2">Homotrimer (By similarity). Interacts with matrix protein (By similarity). Interacts with host TRFC. Interacts with host BST2; this interaction inhibits viral budding by tethering new virions to the cell surface. Interacts with ITGB1. Interacts with host GRM2 (By similarity).</text>
</comment>
<comment type="subcellular location">
    <subcellularLocation>
        <location evidence="4">Virion membrane</location>
        <topology evidence="4">Single-pass type I membrane protein</topology>
    </subcellularLocation>
</comment>
<comment type="PTM">
    <text evidence="1">Glycosylated and palmitoylated by host. Glycosylation is crucial for glycoprotein export at the cell surface (By similarity).</text>
</comment>
<comment type="biotechnology">
    <text>Primary surface antigen capable of inducing and reacting with virus-neutralizing antibodies. Almost all human and veterinary vaccines are based on the functional aspects of the G protein.</text>
</comment>
<comment type="miscellaneous">
    <text evidence="1">Arg-352 is highly involved in rabies virus pathogenicity. Its mutation dramatically attenuates the virus (By similarity).</text>
</comment>
<comment type="similarity">
    <text evidence="4">Belongs to the lyssavirus glycoprotein family.</text>
</comment>
<organism>
    <name type="scientific">Rabies virus (strain silver-haired bat-associated)</name>
    <name type="common">RABV</name>
    <name type="synonym">SHBRV</name>
    <dbReference type="NCBI Taxonomy" id="445793"/>
    <lineage>
        <taxon>Viruses</taxon>
        <taxon>Riboviria</taxon>
        <taxon>Orthornavirae</taxon>
        <taxon>Negarnaviricota</taxon>
        <taxon>Haploviricotina</taxon>
        <taxon>Monjiviricetes</taxon>
        <taxon>Mononegavirales</taxon>
        <taxon>Rhabdoviridae</taxon>
        <taxon>Alpharhabdovirinae</taxon>
        <taxon>Lyssavirus</taxon>
        <taxon>Lyssavirus rabies</taxon>
    </lineage>
</organism>
<protein>
    <recommendedName>
        <fullName>Glycoprotein</fullName>
    </recommendedName>
</protein>
<reference key="1">
    <citation type="journal article" date="2004" name="Proc. Natl. Acad. Sci. U.S.A.">
        <title>Identification of viral genomic elements responsible for rabies virus neuroinvasiveness.</title>
        <authorList>
            <person name="Faber M."/>
            <person name="Pulmanausahakul R."/>
            <person name="Nagao K."/>
            <person name="Prosniak M."/>
            <person name="Rice A.B."/>
            <person name="Koprowski H."/>
            <person name="Schnell M.J."/>
            <person name="Dietzschold B."/>
        </authorList>
    </citation>
    <scope>NUCLEOTIDE SEQUENCE [GENOMIC RNA]</scope>
</reference>
<organismHost>
    <name type="scientific">Homo sapiens</name>
    <name type="common">Human</name>
    <dbReference type="NCBI Taxonomy" id="9606"/>
</organismHost>
<organismHost>
    <name type="scientific">Mammalia</name>
    <dbReference type="NCBI Taxonomy" id="40674"/>
</organismHost>
<feature type="signal peptide" evidence="3">
    <location>
        <begin position="1"/>
        <end position="19"/>
    </location>
</feature>
<feature type="chain" id="PRO_0000295798" description="Glycoprotein">
    <location>
        <begin position="20"/>
        <end position="524"/>
    </location>
</feature>
<feature type="topological domain" description="Virion surface" evidence="3">
    <location>
        <begin position="20"/>
        <end position="459"/>
    </location>
</feature>
<feature type="transmembrane region" description="Helical" evidence="3">
    <location>
        <begin position="460"/>
        <end position="480"/>
    </location>
</feature>
<feature type="topological domain" description="Intravirion" evidence="3">
    <location>
        <begin position="481"/>
        <end position="524"/>
    </location>
</feature>
<feature type="lipid moiety-binding region" description="S-palmitoyl cysteine; by host" evidence="1">
    <location>
        <position position="480"/>
    </location>
</feature>
<feature type="glycosylation site" description="N-linked (GlcNAc...) asparagine; by host" evidence="3">
    <location>
        <position position="256"/>
    </location>
</feature>
<feature type="glycosylation site" description="N-linked (GlcNAc...) asparagine; by host" evidence="1">
    <location>
        <position position="338"/>
    </location>
</feature>
<feature type="disulfide bond" evidence="2">
    <location>
        <begin position="43"/>
        <end position="302"/>
    </location>
</feature>
<feature type="disulfide bond" evidence="2">
    <location>
        <begin position="54"/>
        <end position="226"/>
    </location>
</feature>
<feature type="disulfide bond" evidence="2">
    <location>
        <begin position="80"/>
        <end position="113"/>
    </location>
</feature>
<feature type="disulfide bond" evidence="2">
    <location>
        <begin position="178"/>
        <end position="188"/>
    </location>
</feature>
<feature type="disulfide bond" evidence="2">
    <location>
        <begin position="208"/>
        <end position="247"/>
    </location>
</feature>
<feature type="disulfide bond" evidence="2">
    <location>
        <begin position="242"/>
        <end position="271"/>
    </location>
</feature>
<feature type="disulfide bond" evidence="2">
    <location>
        <begin position="363"/>
        <end position="370"/>
    </location>
</feature>
<dbReference type="EMBL" id="AY705373">
    <property type="protein sequence ID" value="AAU11518.1"/>
    <property type="molecule type" value="Genomic_RNA"/>
</dbReference>
<dbReference type="SMR" id="Q66T62"/>
<dbReference type="GlyCosmos" id="Q66T62">
    <property type="glycosylation" value="2 sites, No reported glycans"/>
</dbReference>
<dbReference type="Proteomes" id="UP000006845">
    <property type="component" value="Genome"/>
</dbReference>
<dbReference type="GO" id="GO:0016020">
    <property type="term" value="C:membrane"/>
    <property type="evidence" value="ECO:0007669"/>
    <property type="project" value="UniProtKB-KW"/>
</dbReference>
<dbReference type="GO" id="GO:0019031">
    <property type="term" value="C:viral envelope"/>
    <property type="evidence" value="ECO:0007669"/>
    <property type="project" value="UniProtKB-KW"/>
</dbReference>
<dbReference type="GO" id="GO:0036338">
    <property type="term" value="C:viral membrane"/>
    <property type="evidence" value="ECO:0000250"/>
    <property type="project" value="UniProtKB"/>
</dbReference>
<dbReference type="GO" id="GO:0055036">
    <property type="term" value="C:virion membrane"/>
    <property type="evidence" value="ECO:0007669"/>
    <property type="project" value="UniProtKB-SubCell"/>
</dbReference>
<dbReference type="GO" id="GO:0098670">
    <property type="term" value="P:entry receptor-mediated virion attachment to host cell"/>
    <property type="evidence" value="ECO:0000250"/>
    <property type="project" value="UniProtKB"/>
</dbReference>
<dbReference type="GO" id="GO:0039654">
    <property type="term" value="P:fusion of virus membrane with host endosome membrane"/>
    <property type="evidence" value="ECO:0000250"/>
    <property type="project" value="UniProtKB"/>
</dbReference>
<dbReference type="Gene3D" id="2.30.29.130">
    <property type="match status" value="1"/>
</dbReference>
<dbReference type="InterPro" id="IPR055448">
    <property type="entry name" value="PH_Rhabdo_glycop"/>
</dbReference>
<dbReference type="InterPro" id="IPR055447">
    <property type="entry name" value="Rhabdo_glycop_CD"/>
</dbReference>
<dbReference type="InterPro" id="IPR001903">
    <property type="entry name" value="Rhabdo_glycop_FD"/>
</dbReference>
<dbReference type="Pfam" id="PF24834">
    <property type="entry name" value="PH_Rhabdo_glycop"/>
    <property type="match status" value="1"/>
</dbReference>
<dbReference type="Pfam" id="PF24833">
    <property type="entry name" value="Rhabdo_glycop_CD"/>
    <property type="match status" value="1"/>
</dbReference>
<dbReference type="Pfam" id="PF00974">
    <property type="entry name" value="Rhabdo_glycop_FD"/>
    <property type="match status" value="1"/>
</dbReference>
<dbReference type="SUPFAM" id="SSF161008">
    <property type="entry name" value="Viral glycoprotein ectodomain-like"/>
    <property type="match status" value="1"/>
</dbReference>
<proteinExistence type="evidence at protein level"/>
<name>GLYCO_RABVB</name>
<sequence>MIPQALLFVPLLIPSLCLGKFPIYTIPDKLGPWSPIDIHHLSCPNNLVVEDEGCTSLSGFSYMELKVGYISAMKVNGFTCTGVVTEAETYTNFVGYVTTTFKRKHFRPMPDACRAAHDWKIAGDPRYEDSLQNPYPDYHWLRTVKTTKESLVIISPSVADLDPYDKSLHSRVFPSGKCLGITVSSTYCPTNHDYTIWMPVEARLGTSCDIFTNSRGKKASKGGRTCGFVDERGLYKSLKGACKLKLCGVPGLRLMNGTWVSIQTSDDIKWCPPDQLVNLHDFHSDEIEHLVVEELIKKREGCLDALESIMTTKSVSFRRLSHLRKLVPGFGKAYTIFNNTLMEADAHYKSVRTWNEVIPSKGCLKVGGRCHPPVNGVFFNGIILGPDGNVLIPEMQSSLLQQHMELLESSVIPLMHPLADPSTVFKDGDEAEDFVEVHLPDVHKQVSDVDLGLPSWGKYLLMSAGALATLILAIFLITCCRRANRTKSTQRGHRESGGKVSVAPQNGKIISSWELYKSESETGM</sequence>
<gene>
    <name type="primary">G</name>
</gene>
<keyword id="KW-1015">Disulfide bond</keyword>
<keyword id="KW-0325">Glycoprotein</keyword>
<keyword id="KW-0449">Lipoprotein</keyword>
<keyword id="KW-0472">Membrane</keyword>
<keyword id="KW-0564">Palmitate</keyword>
<keyword id="KW-0732">Signal</keyword>
<keyword id="KW-0812">Transmembrane</keyword>
<keyword id="KW-1133">Transmembrane helix</keyword>
<keyword id="KW-0261">Viral envelope protein</keyword>
<keyword id="KW-0946">Virion</keyword>
<evidence type="ECO:0000250" key="1"/>
<evidence type="ECO:0000250" key="2">
    <source>
        <dbReference type="UniProtKB" id="P08667"/>
    </source>
</evidence>
<evidence type="ECO:0000255" key="3"/>
<evidence type="ECO:0000305" key="4"/>